<evidence type="ECO:0000255" key="1">
    <source>
        <dbReference type="HAMAP-Rule" id="MF_01328"/>
    </source>
</evidence>
<evidence type="ECO:0000256" key="2">
    <source>
        <dbReference type="SAM" id="MobiDB-lite"/>
    </source>
</evidence>
<evidence type="ECO:0000305" key="3"/>
<dbReference type="EMBL" id="CP000259">
    <property type="protein sequence ID" value="ABF31233.1"/>
    <property type="molecule type" value="Genomic_DNA"/>
</dbReference>
<dbReference type="RefSeq" id="WP_002986657.1">
    <property type="nucleotide sequence ID" value="NC_008021.1"/>
</dbReference>
<dbReference type="SMR" id="Q1JP16"/>
<dbReference type="GeneID" id="83689572"/>
<dbReference type="KEGG" id="spk:MGAS9429_Spy0045"/>
<dbReference type="HOGENOM" id="CLU_041575_5_2_9"/>
<dbReference type="Proteomes" id="UP000002433">
    <property type="component" value="Chromosome"/>
</dbReference>
<dbReference type="GO" id="GO:1990904">
    <property type="term" value="C:ribonucleoprotein complex"/>
    <property type="evidence" value="ECO:0007669"/>
    <property type="project" value="UniProtKB-KW"/>
</dbReference>
<dbReference type="GO" id="GO:0005840">
    <property type="term" value="C:ribosome"/>
    <property type="evidence" value="ECO:0007669"/>
    <property type="project" value="UniProtKB-KW"/>
</dbReference>
<dbReference type="GO" id="GO:0019843">
    <property type="term" value="F:rRNA binding"/>
    <property type="evidence" value="ECO:0007669"/>
    <property type="project" value="UniProtKB-UniRule"/>
</dbReference>
<dbReference type="GO" id="GO:0003735">
    <property type="term" value="F:structural constituent of ribosome"/>
    <property type="evidence" value="ECO:0007669"/>
    <property type="project" value="InterPro"/>
</dbReference>
<dbReference type="GO" id="GO:0006412">
    <property type="term" value="P:translation"/>
    <property type="evidence" value="ECO:0007669"/>
    <property type="project" value="UniProtKB-UniRule"/>
</dbReference>
<dbReference type="FunFam" id="3.40.1370.10:FF:000003">
    <property type="entry name" value="50S ribosomal protein L4"/>
    <property type="match status" value="1"/>
</dbReference>
<dbReference type="Gene3D" id="3.40.1370.10">
    <property type="match status" value="1"/>
</dbReference>
<dbReference type="HAMAP" id="MF_01328_B">
    <property type="entry name" value="Ribosomal_uL4_B"/>
    <property type="match status" value="1"/>
</dbReference>
<dbReference type="InterPro" id="IPR002136">
    <property type="entry name" value="Ribosomal_uL4"/>
</dbReference>
<dbReference type="InterPro" id="IPR013005">
    <property type="entry name" value="Ribosomal_uL4-like"/>
</dbReference>
<dbReference type="InterPro" id="IPR023574">
    <property type="entry name" value="Ribosomal_uL4_dom_sf"/>
</dbReference>
<dbReference type="NCBIfam" id="TIGR03953">
    <property type="entry name" value="rplD_bact"/>
    <property type="match status" value="1"/>
</dbReference>
<dbReference type="PANTHER" id="PTHR10746">
    <property type="entry name" value="50S RIBOSOMAL PROTEIN L4"/>
    <property type="match status" value="1"/>
</dbReference>
<dbReference type="PANTHER" id="PTHR10746:SF6">
    <property type="entry name" value="LARGE RIBOSOMAL SUBUNIT PROTEIN UL4M"/>
    <property type="match status" value="1"/>
</dbReference>
<dbReference type="Pfam" id="PF00573">
    <property type="entry name" value="Ribosomal_L4"/>
    <property type="match status" value="1"/>
</dbReference>
<dbReference type="SUPFAM" id="SSF52166">
    <property type="entry name" value="Ribosomal protein L4"/>
    <property type="match status" value="1"/>
</dbReference>
<proteinExistence type="inferred from homology"/>
<accession>Q1JP16</accession>
<gene>
    <name evidence="1" type="primary">rplD</name>
    <name type="ordered locus">MGAS9429_Spy0045</name>
</gene>
<name>RL4_STRPC</name>
<organism>
    <name type="scientific">Streptococcus pyogenes serotype M12 (strain MGAS9429)</name>
    <dbReference type="NCBI Taxonomy" id="370551"/>
    <lineage>
        <taxon>Bacteria</taxon>
        <taxon>Bacillati</taxon>
        <taxon>Bacillota</taxon>
        <taxon>Bacilli</taxon>
        <taxon>Lactobacillales</taxon>
        <taxon>Streptococcaceae</taxon>
        <taxon>Streptococcus</taxon>
    </lineage>
</organism>
<protein>
    <recommendedName>
        <fullName evidence="1">Large ribosomal subunit protein uL4</fullName>
    </recommendedName>
    <alternativeName>
        <fullName evidence="3">50S ribosomal protein L4</fullName>
    </alternativeName>
</protein>
<comment type="function">
    <text evidence="1">One of the primary rRNA binding proteins, this protein initially binds near the 5'-end of the 23S rRNA. It is important during the early stages of 50S assembly. It makes multiple contacts with different domains of the 23S rRNA in the assembled 50S subunit and ribosome.</text>
</comment>
<comment type="function">
    <text evidence="1">Forms part of the polypeptide exit tunnel.</text>
</comment>
<comment type="subunit">
    <text evidence="1">Part of the 50S ribosomal subunit.</text>
</comment>
<comment type="similarity">
    <text evidence="1">Belongs to the universal ribosomal protein uL4 family.</text>
</comment>
<keyword id="KW-0687">Ribonucleoprotein</keyword>
<keyword id="KW-0689">Ribosomal protein</keyword>
<keyword id="KW-0694">RNA-binding</keyword>
<keyword id="KW-0699">rRNA-binding</keyword>
<reference key="1">
    <citation type="journal article" date="2006" name="Proc. Natl. Acad. Sci. U.S.A.">
        <title>Molecular genetic anatomy of inter- and intraserotype variation in the human bacterial pathogen group A Streptococcus.</title>
        <authorList>
            <person name="Beres S.B."/>
            <person name="Richter E.W."/>
            <person name="Nagiec M.J."/>
            <person name="Sumby P."/>
            <person name="Porcella S.F."/>
            <person name="DeLeo F.R."/>
            <person name="Musser J.M."/>
        </authorList>
    </citation>
    <scope>NUCLEOTIDE SEQUENCE [LARGE SCALE GENOMIC DNA]</scope>
    <source>
        <strain>MGAS9429</strain>
    </source>
</reference>
<feature type="chain" id="PRO_1000052510" description="Large ribosomal subunit protein uL4">
    <location>
        <begin position="1"/>
        <end position="207"/>
    </location>
</feature>
<feature type="region of interest" description="Disordered" evidence="2">
    <location>
        <begin position="49"/>
        <end position="78"/>
    </location>
</feature>
<sequence>MANVKLFDQTGKEVSSVELNDAIFGIEPNESVVFDVVISQRASLRQGTHAVKNRSAVSGGGRKPWRQKGTGRARQGSIRSPQWRGGGVVFGPTPRSYGYKLPQKVRRLALKSVYSAKVAEDKFVAVEGLSFAAPKTAEFAKVLSALSIDTKVLVLVEEGNEFAALSARNLPNVTVATAATASVLDIVNADKLLVTKEAISTIEEVLA</sequence>